<protein>
    <recommendedName>
        <fullName evidence="4">Fe(2+) transporter FeoB</fullName>
    </recommendedName>
    <alternativeName>
        <fullName>Ferrous iron transport protein B</fullName>
    </alternativeName>
</protein>
<sequence>MENYCILGNPNVGKTSLFNALTGSYEYIGNWSGVTVEKKVGKLKENVGQLIDLPGTYDLSPISKDETVVTDYLLNDSFSGIINIVDASQLKRNVQLTVQLLELNQPIYIGLNMIDVATKRGIKIDYHKLMKKLKTPIFPVVARTGKGTKYLLGEIKHLGEGYQPHFKINYGEKIEETIKNMCQIIMTETSHDKYQARFIAIQFLLNNMQIANELNSEVVNKLSSLRDQVAEQVGAVSVRREMERIRNHYIETLLQDVVTYPDEDKQYFSSRIDKILTHKYIGMPIFLAIMWLIFQTTFTWIGTPLSDQLDAFIGGTFTDSVKTIMNYLGVIPFLQDLITDGIIAGVGSVLVFVPQIVVLFFFISLLEDSGYMARIAVLMDRIMESFGLSGKSFIPMIIGFGCNVPSIMAARSIENEKERLTTILIAPFMSCSARLPVYALFVGIFFKENQSLVVLSLYVLGIIMAFLVSTVLTKTILKNDNAIFIVELPTYRVPSIKTLWRSTWEKAKGFVRKAGTFIFGGSVVIWLLSYVGPHGINVNINQSFLHMVGSFFGMLVQPLGFGTWQAGATLVPGFLAKEVIVSSMAIIYSSGDAGLVNVIQNQFTPLSAYAFMIFILLYIPCVSTVAAIRKETYSWKWTALAVAYPLVTAYVLTFIFYQVGHLFV</sequence>
<reference key="1">
    <citation type="journal article" date="2001" name="Lancet">
        <title>Whole genome sequencing of meticillin-resistant Staphylococcus aureus.</title>
        <authorList>
            <person name="Kuroda M."/>
            <person name="Ohta T."/>
            <person name="Uchiyama I."/>
            <person name="Baba T."/>
            <person name="Yuzawa H."/>
            <person name="Kobayashi I."/>
            <person name="Cui L."/>
            <person name="Oguchi A."/>
            <person name="Aoki K."/>
            <person name="Nagai Y."/>
            <person name="Lian J.-Q."/>
            <person name="Ito T."/>
            <person name="Kanamori M."/>
            <person name="Matsumaru H."/>
            <person name="Maruyama A."/>
            <person name="Murakami H."/>
            <person name="Hosoyama A."/>
            <person name="Mizutani-Ui Y."/>
            <person name="Takahashi N.K."/>
            <person name="Sawano T."/>
            <person name="Inoue R."/>
            <person name="Kaito C."/>
            <person name="Sekimizu K."/>
            <person name="Hirakawa H."/>
            <person name="Kuhara S."/>
            <person name="Goto S."/>
            <person name="Yabuzaki J."/>
            <person name="Kanehisa M."/>
            <person name="Yamashita A."/>
            <person name="Oshima K."/>
            <person name="Furuya K."/>
            <person name="Yoshino C."/>
            <person name="Shiba T."/>
            <person name="Hattori M."/>
            <person name="Ogasawara N."/>
            <person name="Hayashi H."/>
            <person name="Hiramatsu K."/>
        </authorList>
    </citation>
    <scope>NUCLEOTIDE SEQUENCE [LARGE SCALE GENOMIC DNA]</scope>
    <source>
        <strain>Mu50 / ATCC 700699</strain>
    </source>
</reference>
<evidence type="ECO:0000250" key="1">
    <source>
        <dbReference type="UniProtKB" id="P33650"/>
    </source>
</evidence>
<evidence type="ECO:0000255" key="2"/>
<evidence type="ECO:0000255" key="3">
    <source>
        <dbReference type="PROSITE-ProRule" id="PRU01048"/>
    </source>
</evidence>
<evidence type="ECO:0000305" key="4"/>
<keyword id="KW-1003">Cell membrane</keyword>
<keyword id="KW-0342">GTP-binding</keyword>
<keyword id="KW-0406">Ion transport</keyword>
<keyword id="KW-0408">Iron</keyword>
<keyword id="KW-0410">Iron transport</keyword>
<keyword id="KW-0472">Membrane</keyword>
<keyword id="KW-0547">Nucleotide-binding</keyword>
<keyword id="KW-0812">Transmembrane</keyword>
<keyword id="KW-1133">Transmembrane helix</keyword>
<keyword id="KW-0813">Transport</keyword>
<feature type="chain" id="PRO_0000210842" description="Fe(2+) transporter FeoB">
    <location>
        <begin position="1"/>
        <end position="664"/>
    </location>
</feature>
<feature type="transmembrane region" description="Helical" evidence="2">
    <location>
        <begin position="281"/>
        <end position="301"/>
    </location>
</feature>
<feature type="transmembrane region" description="Helical" evidence="2">
    <location>
        <begin position="342"/>
        <end position="362"/>
    </location>
</feature>
<feature type="transmembrane region" description="Helical" evidence="2">
    <location>
        <begin position="382"/>
        <end position="402"/>
    </location>
</feature>
<feature type="transmembrane region" description="Helical" evidence="2">
    <location>
        <begin position="425"/>
        <end position="445"/>
    </location>
</feature>
<feature type="transmembrane region" description="Helical" evidence="2">
    <location>
        <begin position="452"/>
        <end position="472"/>
    </location>
</feature>
<feature type="transmembrane region" description="Helical" evidence="2">
    <location>
        <begin position="516"/>
        <end position="536"/>
    </location>
</feature>
<feature type="transmembrane region" description="Helical" evidence="2">
    <location>
        <begin position="544"/>
        <end position="564"/>
    </location>
</feature>
<feature type="transmembrane region" description="Helical" evidence="2">
    <location>
        <begin position="567"/>
        <end position="587"/>
    </location>
</feature>
<feature type="transmembrane region" description="Helical" evidence="2">
    <location>
        <begin position="608"/>
        <end position="628"/>
    </location>
</feature>
<feature type="transmembrane region" description="Helical" evidence="2">
    <location>
        <begin position="637"/>
        <end position="657"/>
    </location>
</feature>
<feature type="domain" description="FeoB-type G" evidence="3">
    <location>
        <begin position="1"/>
        <end position="161"/>
    </location>
</feature>
<feature type="binding site" evidence="3">
    <location>
        <begin position="8"/>
        <end position="15"/>
    </location>
    <ligand>
        <name>GTP</name>
        <dbReference type="ChEBI" id="CHEBI:37565"/>
        <label>1</label>
    </ligand>
</feature>
<feature type="binding site" evidence="3">
    <location>
        <begin position="33"/>
        <end position="37"/>
    </location>
    <ligand>
        <name>GTP</name>
        <dbReference type="ChEBI" id="CHEBI:37565"/>
        <label>2</label>
    </ligand>
</feature>
<feature type="binding site" evidence="3">
    <location>
        <begin position="52"/>
        <end position="55"/>
    </location>
    <ligand>
        <name>GTP</name>
        <dbReference type="ChEBI" id="CHEBI:37565"/>
        <label>3</label>
    </ligand>
</feature>
<feature type="binding site" evidence="3">
    <location>
        <begin position="112"/>
        <end position="115"/>
    </location>
    <ligand>
        <name>GTP</name>
        <dbReference type="ChEBI" id="CHEBI:37565"/>
    </ligand>
</feature>
<feature type="binding site" evidence="3">
    <location>
        <begin position="141"/>
        <end position="143"/>
    </location>
    <ligand>
        <name>GTP</name>
        <dbReference type="ChEBI" id="CHEBI:37565"/>
    </ligand>
</feature>
<name>FEOB_STAAM</name>
<dbReference type="EMBL" id="BA000017">
    <property type="protein sequence ID" value="BAB58712.1"/>
    <property type="molecule type" value="Genomic_DNA"/>
</dbReference>
<dbReference type="RefSeq" id="WP_000432915.1">
    <property type="nucleotide sequence ID" value="NC_002758.2"/>
</dbReference>
<dbReference type="SMR" id="Q99R86"/>
<dbReference type="KEGG" id="sav:SAV2550"/>
<dbReference type="HOGENOM" id="CLU_013350_3_0_9"/>
<dbReference type="PhylomeDB" id="Q99R86"/>
<dbReference type="Proteomes" id="UP000002481">
    <property type="component" value="Chromosome"/>
</dbReference>
<dbReference type="GO" id="GO:0005886">
    <property type="term" value="C:plasma membrane"/>
    <property type="evidence" value="ECO:0007669"/>
    <property type="project" value="UniProtKB-SubCell"/>
</dbReference>
<dbReference type="GO" id="GO:0015093">
    <property type="term" value="F:ferrous iron transmembrane transporter activity"/>
    <property type="evidence" value="ECO:0007669"/>
    <property type="project" value="InterPro"/>
</dbReference>
<dbReference type="GO" id="GO:0005525">
    <property type="term" value="F:GTP binding"/>
    <property type="evidence" value="ECO:0007669"/>
    <property type="project" value="UniProtKB-KW"/>
</dbReference>
<dbReference type="CDD" id="cd01879">
    <property type="entry name" value="FeoB"/>
    <property type="match status" value="1"/>
</dbReference>
<dbReference type="FunFam" id="3.40.50.300:FF:001475">
    <property type="entry name" value="Ferrous iron transport protein B"/>
    <property type="match status" value="1"/>
</dbReference>
<dbReference type="Gene3D" id="1.10.287.1770">
    <property type="match status" value="1"/>
</dbReference>
<dbReference type="Gene3D" id="3.40.50.300">
    <property type="entry name" value="P-loop containing nucleotide triphosphate hydrolases"/>
    <property type="match status" value="1"/>
</dbReference>
<dbReference type="InterPro" id="IPR003373">
    <property type="entry name" value="Fe2_transport_prot-B"/>
</dbReference>
<dbReference type="InterPro" id="IPR011640">
    <property type="entry name" value="Fe2_transport_prot_B_C"/>
</dbReference>
<dbReference type="InterPro" id="IPR041069">
    <property type="entry name" value="FeoB_Cyto"/>
</dbReference>
<dbReference type="InterPro" id="IPR050860">
    <property type="entry name" value="FeoB_GTPase"/>
</dbReference>
<dbReference type="InterPro" id="IPR030389">
    <property type="entry name" value="G_FEOB_dom"/>
</dbReference>
<dbReference type="InterPro" id="IPR011642">
    <property type="entry name" value="Gate_dom"/>
</dbReference>
<dbReference type="InterPro" id="IPR027417">
    <property type="entry name" value="P-loop_NTPase"/>
</dbReference>
<dbReference type="NCBIfam" id="TIGR00437">
    <property type="entry name" value="feoB"/>
    <property type="match status" value="1"/>
</dbReference>
<dbReference type="PANTHER" id="PTHR43185:SF1">
    <property type="entry name" value="FE(2+) TRANSPORTER FEOB"/>
    <property type="match status" value="1"/>
</dbReference>
<dbReference type="PANTHER" id="PTHR43185">
    <property type="entry name" value="FERROUS IRON TRANSPORT PROTEIN B"/>
    <property type="match status" value="1"/>
</dbReference>
<dbReference type="Pfam" id="PF07664">
    <property type="entry name" value="FeoB_C"/>
    <property type="match status" value="1"/>
</dbReference>
<dbReference type="Pfam" id="PF17910">
    <property type="entry name" value="FeoB_Cyto"/>
    <property type="match status" value="1"/>
</dbReference>
<dbReference type="Pfam" id="PF02421">
    <property type="entry name" value="FeoB_N"/>
    <property type="match status" value="1"/>
</dbReference>
<dbReference type="Pfam" id="PF07670">
    <property type="entry name" value="Gate"/>
    <property type="match status" value="2"/>
</dbReference>
<dbReference type="SUPFAM" id="SSF52540">
    <property type="entry name" value="P-loop containing nucleoside triphosphate hydrolases"/>
    <property type="match status" value="1"/>
</dbReference>
<dbReference type="PROSITE" id="PS51711">
    <property type="entry name" value="G_FEOB"/>
    <property type="match status" value="1"/>
</dbReference>
<accession>Q99R86</accession>
<proteinExistence type="inferred from homology"/>
<organism>
    <name type="scientific">Staphylococcus aureus (strain Mu50 / ATCC 700699)</name>
    <dbReference type="NCBI Taxonomy" id="158878"/>
    <lineage>
        <taxon>Bacteria</taxon>
        <taxon>Bacillati</taxon>
        <taxon>Bacillota</taxon>
        <taxon>Bacilli</taxon>
        <taxon>Bacillales</taxon>
        <taxon>Staphylococcaceae</taxon>
        <taxon>Staphylococcus</taxon>
    </lineage>
</organism>
<gene>
    <name type="primary">feoB</name>
    <name type="ordered locus">SAV2550</name>
</gene>
<comment type="function">
    <text evidence="1">Probable transporter of a GTP-driven Fe(2+) uptake system.</text>
</comment>
<comment type="subcellular location">
    <subcellularLocation>
        <location evidence="4">Cell membrane</location>
        <topology evidence="2">Multi-pass membrane protein</topology>
    </subcellularLocation>
</comment>
<comment type="similarity">
    <text evidence="3">Belongs to the TRAFAC class TrmE-Era-EngA-EngB-Septin-like GTPase superfamily. FeoB GTPase (TC 9.A.8) family.</text>
</comment>